<feature type="chain" id="PRO_0000398712" description="Phosphoenolpyruvate guanylyltransferase">
    <location>
        <begin position="1"/>
        <end position="214"/>
    </location>
</feature>
<feature type="binding site" evidence="1">
    <location>
        <position position="139"/>
    </location>
    <ligand>
        <name>phosphoenolpyruvate</name>
        <dbReference type="ChEBI" id="CHEBI:58702"/>
    </ligand>
</feature>
<feature type="binding site" evidence="1">
    <location>
        <position position="155"/>
    </location>
    <ligand>
        <name>phosphoenolpyruvate</name>
        <dbReference type="ChEBI" id="CHEBI:58702"/>
    </ligand>
</feature>
<feature type="binding site" evidence="1">
    <location>
        <position position="158"/>
    </location>
    <ligand>
        <name>phosphoenolpyruvate</name>
        <dbReference type="ChEBI" id="CHEBI:58702"/>
    </ligand>
</feature>
<proteinExistence type="inferred from homology"/>
<comment type="function">
    <text evidence="1">Guanylyltransferase that catalyzes the activation of phosphoenolpyruvate (PEP) as enolpyruvoyl-2-diphospho-5'-guanosine, via the condensation of PEP with GTP. It is involved in the biosynthesis of coenzyme F420, a hydride carrier cofactor.</text>
</comment>
<comment type="catalytic activity">
    <reaction evidence="1">
        <text>phosphoenolpyruvate + GTP + H(+) = enolpyruvoyl-2-diphospho-5'-guanosine + diphosphate</text>
        <dbReference type="Rhea" id="RHEA:30519"/>
        <dbReference type="ChEBI" id="CHEBI:15378"/>
        <dbReference type="ChEBI" id="CHEBI:33019"/>
        <dbReference type="ChEBI" id="CHEBI:37565"/>
        <dbReference type="ChEBI" id="CHEBI:58702"/>
        <dbReference type="ChEBI" id="CHEBI:143701"/>
        <dbReference type="EC" id="2.7.7.105"/>
    </reaction>
</comment>
<comment type="pathway">
    <text evidence="1">Cofactor biosynthesis; coenzyme F420 biosynthesis.</text>
</comment>
<comment type="similarity">
    <text evidence="1">Belongs to the CofC family.</text>
</comment>
<accession>A8M5I9</accession>
<protein>
    <recommendedName>
        <fullName evidence="1">Phosphoenolpyruvate guanylyltransferase</fullName>
        <shortName evidence="1">PEP guanylyltransferase</shortName>
        <ecNumber evidence="1">2.7.7.105</ecNumber>
    </recommendedName>
</protein>
<gene>
    <name evidence="1" type="primary">fbiD</name>
    <name type="ordered locus">Sare_1155</name>
</gene>
<dbReference type="EC" id="2.7.7.105" evidence="1"/>
<dbReference type="EMBL" id="CP000850">
    <property type="protein sequence ID" value="ABV97063.1"/>
    <property type="molecule type" value="Genomic_DNA"/>
</dbReference>
<dbReference type="SMR" id="A8M5I9"/>
<dbReference type="STRING" id="391037.Sare_1155"/>
<dbReference type="KEGG" id="saq:Sare_1155"/>
<dbReference type="PATRIC" id="fig|391037.6.peg.1172"/>
<dbReference type="eggNOG" id="COG1920">
    <property type="taxonomic scope" value="Bacteria"/>
</dbReference>
<dbReference type="HOGENOM" id="CLU_076569_0_0_11"/>
<dbReference type="UniPathway" id="UPA00071"/>
<dbReference type="GO" id="GO:0005525">
    <property type="term" value="F:GTP binding"/>
    <property type="evidence" value="ECO:0007669"/>
    <property type="project" value="UniProtKB-KW"/>
</dbReference>
<dbReference type="GO" id="GO:0043814">
    <property type="term" value="F:phospholactate guanylyltransferase activity"/>
    <property type="evidence" value="ECO:0007669"/>
    <property type="project" value="InterPro"/>
</dbReference>
<dbReference type="GO" id="GO:0052645">
    <property type="term" value="P:F420-0 metabolic process"/>
    <property type="evidence" value="ECO:0007669"/>
    <property type="project" value="UniProtKB-UniRule"/>
</dbReference>
<dbReference type="Gene3D" id="3.90.550.10">
    <property type="entry name" value="Spore Coat Polysaccharide Biosynthesis Protein SpsA, Chain A"/>
    <property type="match status" value="1"/>
</dbReference>
<dbReference type="HAMAP" id="MF_02114">
    <property type="entry name" value="CofC"/>
    <property type="match status" value="1"/>
</dbReference>
<dbReference type="InterPro" id="IPR002835">
    <property type="entry name" value="CofC"/>
</dbReference>
<dbReference type="InterPro" id="IPR025877">
    <property type="entry name" value="MobA-like_NTP_Trfase"/>
</dbReference>
<dbReference type="InterPro" id="IPR029044">
    <property type="entry name" value="Nucleotide-diphossugar_trans"/>
</dbReference>
<dbReference type="NCBIfam" id="TIGR03552">
    <property type="entry name" value="F420_cofC"/>
    <property type="match status" value="1"/>
</dbReference>
<dbReference type="PANTHER" id="PTHR40392">
    <property type="entry name" value="2-PHOSPHO-L-LACTATE GUANYLYLTRANSFERASE"/>
    <property type="match status" value="1"/>
</dbReference>
<dbReference type="PANTHER" id="PTHR40392:SF1">
    <property type="entry name" value="2-PHOSPHO-L-LACTATE GUANYLYLTRANSFERASE"/>
    <property type="match status" value="1"/>
</dbReference>
<dbReference type="Pfam" id="PF12804">
    <property type="entry name" value="NTP_transf_3"/>
    <property type="match status" value="1"/>
</dbReference>
<dbReference type="SUPFAM" id="SSF53448">
    <property type="entry name" value="Nucleotide-diphospho-sugar transferases"/>
    <property type="match status" value="1"/>
</dbReference>
<sequence>MTQVWTVVVPVKRLGVAKSRLRGALPDQPHEALALALAVDTVSAVLACPVVADVLVVTDDPAVATETGMAGARVVPDRPAAGLNSAVRHGAATAGAGWIAGLTADLPALRPAELAAALSAARTGPTSRRYLPDAPGTGTVLLAAPPGVPLNPRFGGSSAAAHAASGALALLGDWPSLRRDVDTATDLAEAARLGLGPRTALLCGTAAPTAGRSV</sequence>
<keyword id="KW-0342">GTP-binding</keyword>
<keyword id="KW-0547">Nucleotide-binding</keyword>
<keyword id="KW-0548">Nucleotidyltransferase</keyword>
<keyword id="KW-0808">Transferase</keyword>
<name>FBID_SALAI</name>
<organism>
    <name type="scientific">Salinispora arenicola (strain CNS-205)</name>
    <dbReference type="NCBI Taxonomy" id="391037"/>
    <lineage>
        <taxon>Bacteria</taxon>
        <taxon>Bacillati</taxon>
        <taxon>Actinomycetota</taxon>
        <taxon>Actinomycetes</taxon>
        <taxon>Micromonosporales</taxon>
        <taxon>Micromonosporaceae</taxon>
        <taxon>Salinispora</taxon>
    </lineage>
</organism>
<reference key="1">
    <citation type="submission" date="2007-10" db="EMBL/GenBank/DDBJ databases">
        <title>Complete sequence of Salinispora arenicola CNS-205.</title>
        <authorList>
            <consortium name="US DOE Joint Genome Institute"/>
            <person name="Copeland A."/>
            <person name="Lucas S."/>
            <person name="Lapidus A."/>
            <person name="Barry K."/>
            <person name="Glavina del Rio T."/>
            <person name="Dalin E."/>
            <person name="Tice H."/>
            <person name="Pitluck S."/>
            <person name="Foster B."/>
            <person name="Schmutz J."/>
            <person name="Larimer F."/>
            <person name="Land M."/>
            <person name="Hauser L."/>
            <person name="Kyrpides N."/>
            <person name="Ivanova N."/>
            <person name="Jensen P.R."/>
            <person name="Moore B.S."/>
            <person name="Penn K."/>
            <person name="Jenkins C."/>
            <person name="Udwary D."/>
            <person name="Xiang L."/>
            <person name="Gontang E."/>
            <person name="Richardson P."/>
        </authorList>
    </citation>
    <scope>NUCLEOTIDE SEQUENCE [LARGE SCALE GENOMIC DNA]</scope>
    <source>
        <strain>CNS-205</strain>
    </source>
</reference>
<evidence type="ECO:0000255" key="1">
    <source>
        <dbReference type="HAMAP-Rule" id="MF_02114"/>
    </source>
</evidence>